<organism>
    <name type="scientific">Geobacillus kaustophilus (strain HTA426)</name>
    <dbReference type="NCBI Taxonomy" id="235909"/>
    <lineage>
        <taxon>Bacteria</taxon>
        <taxon>Bacillati</taxon>
        <taxon>Bacillota</taxon>
        <taxon>Bacilli</taxon>
        <taxon>Bacillales</taxon>
        <taxon>Anoxybacillaceae</taxon>
        <taxon>Geobacillus</taxon>
        <taxon>Geobacillus thermoleovorans group</taxon>
    </lineage>
</organism>
<reference key="1">
    <citation type="journal article" date="2004" name="Nucleic Acids Res.">
        <title>Thermoadaptation trait revealed by the genome sequence of thermophilic Geobacillus kaustophilus.</title>
        <authorList>
            <person name="Takami H."/>
            <person name="Takaki Y."/>
            <person name="Chee G.-J."/>
            <person name="Nishi S."/>
            <person name="Shimamura S."/>
            <person name="Suzuki H."/>
            <person name="Matsui S."/>
            <person name="Uchiyama I."/>
        </authorList>
    </citation>
    <scope>NUCLEOTIDE SEQUENCE [LARGE SCALE GENOMIC DNA]</scope>
    <source>
        <strain>HTA426</strain>
    </source>
</reference>
<feature type="chain" id="PRO_0000346629" description="Nucleoid occlusion protein">
    <location>
        <begin position="1"/>
        <end position="281"/>
    </location>
</feature>
<feature type="DNA-binding region" description="H-T-H motif" evidence="1">
    <location>
        <begin position="145"/>
        <end position="164"/>
    </location>
</feature>
<feature type="region of interest" description="Disordered" evidence="2">
    <location>
        <begin position="1"/>
        <end position="24"/>
    </location>
</feature>
<protein>
    <recommendedName>
        <fullName evidence="1">Nucleoid occlusion protein</fullName>
        <shortName evidence="1">Noc</shortName>
    </recommendedName>
</protein>
<gene>
    <name evidence="1" type="primary">noc</name>
    <name type="ordered locus">GK3491</name>
</gene>
<name>NOC_GEOKA</name>
<sequence>MKHPFSRLFSFGEKEQEEMEEKQEREEVRHIPVKSIIPNRFQPRTMFDEEKIDELALTIRTHGIIQPIVVRECGNGRFEIIAGERRWRAVQKLGWTEIPAIIKNLNDKETASVALIENLQREELTPIEEAMAYAKLIELHDLTQEALAQRLGKGQSTIANKLRLLKLPQEVQEALLQRAITERHARALIALKDKEKQLKLLQEIIDKQLNVKQTEDRVLKLLEAGERKPKPKRKAFSRDMRIAVNTIRQSLSMVESSGVSVQSEEEEFDDYYQITIRIAKK</sequence>
<dbReference type="EMBL" id="BA000043">
    <property type="protein sequence ID" value="BAD77776.1"/>
    <property type="molecule type" value="Genomic_DNA"/>
</dbReference>
<dbReference type="RefSeq" id="WP_011232954.1">
    <property type="nucleotide sequence ID" value="NC_006510.1"/>
</dbReference>
<dbReference type="SMR" id="Q5KU60"/>
<dbReference type="STRING" id="235909.GK3491"/>
<dbReference type="GeneID" id="32065368"/>
<dbReference type="KEGG" id="gka:GK3491"/>
<dbReference type="eggNOG" id="COG1475">
    <property type="taxonomic scope" value="Bacteria"/>
</dbReference>
<dbReference type="HOGENOM" id="CLU_023853_0_1_9"/>
<dbReference type="Proteomes" id="UP000001172">
    <property type="component" value="Chromosome"/>
</dbReference>
<dbReference type="GO" id="GO:0005694">
    <property type="term" value="C:chromosome"/>
    <property type="evidence" value="ECO:0007669"/>
    <property type="project" value="TreeGrafter"/>
</dbReference>
<dbReference type="GO" id="GO:0005737">
    <property type="term" value="C:cytoplasm"/>
    <property type="evidence" value="ECO:0007669"/>
    <property type="project" value="UniProtKB-UniRule"/>
</dbReference>
<dbReference type="GO" id="GO:0009295">
    <property type="term" value="C:nucleoid"/>
    <property type="evidence" value="ECO:0007669"/>
    <property type="project" value="UniProtKB-SubCell"/>
</dbReference>
<dbReference type="GO" id="GO:0003677">
    <property type="term" value="F:DNA binding"/>
    <property type="evidence" value="ECO:0007669"/>
    <property type="project" value="UniProtKB-UniRule"/>
</dbReference>
<dbReference type="GO" id="GO:0007059">
    <property type="term" value="P:chromosome segregation"/>
    <property type="evidence" value="ECO:0007669"/>
    <property type="project" value="TreeGrafter"/>
</dbReference>
<dbReference type="GO" id="GO:0000917">
    <property type="term" value="P:division septum assembly"/>
    <property type="evidence" value="ECO:0007669"/>
    <property type="project" value="UniProtKB-KW"/>
</dbReference>
<dbReference type="GO" id="GO:0045881">
    <property type="term" value="P:positive regulation of sporulation resulting in formation of a cellular spore"/>
    <property type="evidence" value="ECO:0007669"/>
    <property type="project" value="TreeGrafter"/>
</dbReference>
<dbReference type="CDD" id="cd16393">
    <property type="entry name" value="SPO0J_N"/>
    <property type="match status" value="1"/>
</dbReference>
<dbReference type="FunFam" id="1.10.10.2830:FF:000001">
    <property type="entry name" value="Chromosome partitioning protein ParB"/>
    <property type="match status" value="1"/>
</dbReference>
<dbReference type="FunFam" id="3.90.1530.30:FF:000001">
    <property type="entry name" value="Chromosome partitioning protein ParB"/>
    <property type="match status" value="1"/>
</dbReference>
<dbReference type="Gene3D" id="1.10.10.2830">
    <property type="match status" value="1"/>
</dbReference>
<dbReference type="Gene3D" id="3.90.1530.30">
    <property type="match status" value="1"/>
</dbReference>
<dbReference type="HAMAP" id="MF_02015">
    <property type="entry name" value="ParB_Noc"/>
    <property type="match status" value="1"/>
</dbReference>
<dbReference type="InterPro" id="IPR050336">
    <property type="entry name" value="Chromosome_partition/occlusion"/>
</dbReference>
<dbReference type="InterPro" id="IPR041468">
    <property type="entry name" value="HTH_ParB/Spo0J"/>
</dbReference>
<dbReference type="InterPro" id="IPR023705">
    <property type="entry name" value="Nucleoid_occlusion_protein"/>
</dbReference>
<dbReference type="InterPro" id="IPR004437">
    <property type="entry name" value="ParB/RepB/Spo0J"/>
</dbReference>
<dbReference type="InterPro" id="IPR003115">
    <property type="entry name" value="ParB/Sulfiredoxin_dom"/>
</dbReference>
<dbReference type="InterPro" id="IPR036086">
    <property type="entry name" value="ParB/Sulfiredoxin_sf"/>
</dbReference>
<dbReference type="NCBIfam" id="TIGR04285">
    <property type="entry name" value="nucleoid_noc"/>
    <property type="match status" value="1"/>
</dbReference>
<dbReference type="NCBIfam" id="TIGR00180">
    <property type="entry name" value="parB_part"/>
    <property type="match status" value="1"/>
</dbReference>
<dbReference type="PANTHER" id="PTHR33375">
    <property type="entry name" value="CHROMOSOME-PARTITIONING PROTEIN PARB-RELATED"/>
    <property type="match status" value="1"/>
</dbReference>
<dbReference type="PANTHER" id="PTHR33375:SF8">
    <property type="entry name" value="NUCLEOID OCCLUSION PROTEIN"/>
    <property type="match status" value="1"/>
</dbReference>
<dbReference type="Pfam" id="PF17762">
    <property type="entry name" value="HTH_ParB"/>
    <property type="match status" value="1"/>
</dbReference>
<dbReference type="Pfam" id="PF02195">
    <property type="entry name" value="ParBc"/>
    <property type="match status" value="1"/>
</dbReference>
<dbReference type="SMART" id="SM00470">
    <property type="entry name" value="ParB"/>
    <property type="match status" value="1"/>
</dbReference>
<dbReference type="SUPFAM" id="SSF109709">
    <property type="entry name" value="KorB DNA-binding domain-like"/>
    <property type="match status" value="1"/>
</dbReference>
<dbReference type="SUPFAM" id="SSF110849">
    <property type="entry name" value="ParB/Sulfiredoxin"/>
    <property type="match status" value="1"/>
</dbReference>
<keyword id="KW-0131">Cell cycle</keyword>
<keyword id="KW-0132">Cell division</keyword>
<keyword id="KW-0963">Cytoplasm</keyword>
<keyword id="KW-0238">DNA-binding</keyword>
<keyword id="KW-1185">Reference proteome</keyword>
<keyword id="KW-0717">Septation</keyword>
<proteinExistence type="inferred from homology"/>
<evidence type="ECO:0000255" key="1">
    <source>
        <dbReference type="HAMAP-Rule" id="MF_02015"/>
    </source>
</evidence>
<evidence type="ECO:0000256" key="2">
    <source>
        <dbReference type="SAM" id="MobiDB-lite"/>
    </source>
</evidence>
<accession>Q5KU60</accession>
<comment type="function">
    <text evidence="1">Effects nucleoid occlusion by binding relatively nonspecifically to DNA and preventing the assembly of the division machinery in the vicinity of the nucleoid, especially under conditions that disturb the cell cycle. It helps to coordinate cell division and chromosome segregation by preventing the formation of the Z ring through the nucleoid, which would cause chromosome breakage.</text>
</comment>
<comment type="subcellular location">
    <subcellularLocation>
        <location evidence="1">Cytoplasm</location>
        <location evidence="1">Nucleoid</location>
    </subcellularLocation>
</comment>
<comment type="similarity">
    <text evidence="1">Belongs to the ParB family.</text>
</comment>